<evidence type="ECO:0000250" key="1"/>
<evidence type="ECO:0000250" key="2">
    <source>
        <dbReference type="UniProtKB" id="Q6NY15"/>
    </source>
</evidence>
<evidence type="ECO:0000250" key="3">
    <source>
        <dbReference type="UniProtKB" id="Q9Z220"/>
    </source>
</evidence>
<evidence type="ECO:0000256" key="4">
    <source>
        <dbReference type="SAM" id="MobiDB-lite"/>
    </source>
</evidence>
<evidence type="ECO:0000269" key="5">
    <source>
    </source>
</evidence>
<evidence type="ECO:0000269" key="6">
    <source>
    </source>
</evidence>
<evidence type="ECO:0000269" key="7">
    <source>
    </source>
</evidence>
<evidence type="ECO:0000303" key="8">
    <source>
    </source>
</evidence>
<evidence type="ECO:0000305" key="9"/>
<evidence type="ECO:0007744" key="10">
    <source>
    </source>
</evidence>
<organism>
    <name type="scientific">Homo sapiens</name>
    <name type="common">Human</name>
    <dbReference type="NCBI Taxonomy" id="9606"/>
    <lineage>
        <taxon>Eukaryota</taxon>
        <taxon>Metazoa</taxon>
        <taxon>Chordata</taxon>
        <taxon>Craniata</taxon>
        <taxon>Vertebrata</taxon>
        <taxon>Euteleostomi</taxon>
        <taxon>Mammalia</taxon>
        <taxon>Eutheria</taxon>
        <taxon>Euarchontoglires</taxon>
        <taxon>Primates</taxon>
        <taxon>Haplorrhini</taxon>
        <taxon>Catarrhini</taxon>
        <taxon>Hominidae</taxon>
        <taxon>Homo</taxon>
    </lineage>
</organism>
<proteinExistence type="evidence at protein level"/>
<name>TSG10_HUMAN</name>
<gene>
    <name type="primary">TSGA10</name>
    <name type="synonym">CEP4L</name>
</gene>
<sequence length="698" mass="81421">MMRSRSKSPRRPSPTARGANCDVELLKTTTRDREELKCMLEKYERHLAEIQGNVKVLKSERDKIFLLYEQAQEEITRLRREMMKSCKSPKSTTAHAILRRVETERDVAFTDLRRMTTERDSLRERLKIAQETAFNEKAHLEQRIEELECTVHNLDDERMEQMSNMTLMKETISTVEKEMKSLARKAMDTESELGRQKAENNSLRLLYENTEKDLSDTQRHLAKKKYELQLTQEKIMCLDEKIDNFTRQNIAQREEISILGGTLNDLAKEKECLQACLDKKSENIASLGESLAMKEKTISGMKNIIAEMEQASRQCTEALIVCEQDVSRMRRQLDETNDELAQIARERDILAHDNDNLQEQFAKAKQENQALSKKLNDTHNELNDIKQKVQDTNLEVNKLKNILKSEESENRQMMEQLRKANEDAENWENKARQSEADNNTLKLELITAEAEGNRLKEKVDSLNREVEQHLNAERSYKSQISTLHKSVVKMEEELQKVQFEKVSALADLSSTRELCIKLDSSKELLNRQLVAKDQEIEMRENELDSAHSEIELLRSQMANERISMQNLEALLVANRDKEYQSQIALQEKESEIQLLKEHLCLAENKMAIQSRDVAQFRNVVTQLEADLDITKRQLGTERFERERAVQELRRQNYSSNAYHMSSTMKPNTKCHSPERAHHRSPDRGLDRSLEENLCYRDF</sequence>
<comment type="function">
    <text evidence="2 7">Plays a role in spermatogenesis (PubMed:28905369). When overexpressed, prevents nuclear localization of HIF1A (By similarity).</text>
</comment>
<comment type="subunit">
    <text evidence="2">Interacts with HIF1A.</text>
</comment>
<comment type="interaction">
    <interactant intactId="EBI-744794">
        <id>Q9BZW7</id>
    </interactant>
    <interactant intactId="EBI-5463075">
        <id>Q4LEZ3</id>
        <label>AARD</label>
    </interactant>
    <organismsDiffer>false</organismsDiffer>
    <experiments>3</experiments>
</comment>
<comment type="interaction">
    <interactant intactId="EBI-744794">
        <id>Q9BZW7</id>
    </interactant>
    <interactant intactId="EBI-16429430">
        <id>A0A0S2Z4M1</id>
        <label>AXIN1</label>
    </interactant>
    <organismsDiffer>false</organismsDiffer>
    <experiments>3</experiments>
</comment>
<comment type="interaction">
    <interactant intactId="EBI-744794">
        <id>Q9BZW7</id>
    </interactant>
    <interactant intactId="EBI-4400025">
        <id>Q9Y2T1</id>
        <label>AXIN2</label>
    </interactant>
    <organismsDiffer>false</organismsDiffer>
    <experiments>3</experiments>
</comment>
<comment type="interaction">
    <interactant intactId="EBI-744794">
        <id>Q9BZW7</id>
    </interactant>
    <interactant intactId="EBI-10174813">
        <id>A8KA13</id>
        <label>BCL6B</label>
    </interactant>
    <organismsDiffer>false</organismsDiffer>
    <experiments>3</experiments>
</comment>
<comment type="interaction">
    <interactant intactId="EBI-744794">
        <id>Q9BZW7</id>
    </interactant>
    <interactant intactId="EBI-514538">
        <id>Q13490</id>
        <label>BIRC2</label>
    </interactant>
    <organismsDiffer>false</organismsDiffer>
    <experiments>4</experiments>
</comment>
<comment type="interaction">
    <interactant intactId="EBI-744794">
        <id>Q9BZW7</id>
    </interactant>
    <interactant intactId="EBI-712912">
        <id>Q9HC52</id>
        <label>CBX8</label>
    </interactant>
    <organismsDiffer>false</organismsDiffer>
    <experiments>3</experiments>
</comment>
<comment type="interaction">
    <interactant intactId="EBI-744794">
        <id>Q9BZW7</id>
    </interactant>
    <interactant intactId="EBI-741724">
        <id>Q8NA61</id>
        <label>CBY2</label>
    </interactant>
    <organismsDiffer>false</organismsDiffer>
    <experiments>3</experiments>
</comment>
<comment type="interaction">
    <interactant intactId="EBI-744794">
        <id>Q9BZW7</id>
    </interactant>
    <interactant intactId="EBI-347573">
        <id>A6NC98</id>
        <label>CCDC88B</label>
    </interactant>
    <organismsDiffer>false</organismsDiffer>
    <experiments>3</experiments>
</comment>
<comment type="interaction">
    <interactant intactId="EBI-744794">
        <id>Q9BZW7</id>
    </interactant>
    <interactant intactId="EBI-10175300">
        <id>Q8TD31-3</id>
        <label>CCHCR1</label>
    </interactant>
    <organismsDiffer>false</organismsDiffer>
    <experiments>6</experiments>
</comment>
<comment type="interaction">
    <interactant intactId="EBI-744794">
        <id>Q9BZW7</id>
    </interactant>
    <interactant intactId="EBI-930143">
        <id>Q6P1J9</id>
        <label>CDC73</label>
    </interactant>
    <organismsDiffer>false</organismsDiffer>
    <experiments>8</experiments>
</comment>
<comment type="interaction">
    <interactant intactId="EBI-744794">
        <id>Q9BZW7</id>
    </interactant>
    <interactant intactId="EBI-746238">
        <id>Q07002</id>
        <label>CDK18</label>
    </interactant>
    <organismsDiffer>false</organismsDiffer>
    <experiments>3</experiments>
</comment>
<comment type="interaction">
    <interactant intactId="EBI-744794">
        <id>Q9BZW7</id>
    </interactant>
    <interactant intactId="EBI-744115">
        <id>Q9C0F1</id>
        <label>CEP44</label>
    </interactant>
    <organismsDiffer>false</organismsDiffer>
    <experiments>6</experiments>
</comment>
<comment type="interaction">
    <interactant intactId="EBI-744794">
        <id>Q9BZW7</id>
    </interactant>
    <interactant intactId="EBI-11752486">
        <id>Q86XR8-3</id>
        <label>CEP57</label>
    </interactant>
    <organismsDiffer>false</organismsDiffer>
    <experiments>3</experiments>
</comment>
<comment type="interaction">
    <interactant intactId="EBI-744794">
        <id>Q9BZW7</id>
    </interactant>
    <interactant intactId="EBI-10181988">
        <id>Q8IYX8-2</id>
        <label>CEP57L1</label>
    </interactant>
    <organismsDiffer>false</organismsDiffer>
    <experiments>3</experiments>
</comment>
<comment type="interaction">
    <interactant intactId="EBI-744794">
        <id>Q9BZW7</id>
    </interactant>
    <interactant intactId="EBI-3866319">
        <id>Q9Y2V7</id>
        <label>COG6</label>
    </interactant>
    <organismsDiffer>false</organismsDiffer>
    <experiments>3</experiments>
</comment>
<comment type="interaction">
    <interactant intactId="EBI-744794">
        <id>Q9BZW7</id>
    </interactant>
    <interactant intactId="EBI-10192698">
        <id>Q02930-3</id>
        <label>CREB5</label>
    </interactant>
    <organismsDiffer>false</organismsDiffer>
    <experiments>3</experiments>
</comment>
<comment type="interaction">
    <interactant intactId="EBI-744794">
        <id>Q9BZW7</id>
    </interactant>
    <interactant intactId="EBI-11988027">
        <id>Q9NRI5-2</id>
        <label>DISC1</label>
    </interactant>
    <organismsDiffer>false</organismsDiffer>
    <experiments>3</experiments>
</comment>
<comment type="interaction">
    <interactant intactId="EBI-744794">
        <id>Q9BZW7</id>
    </interactant>
    <interactant intactId="EBI-7225287">
        <id>Q96MY7</id>
        <label>FAM161B</label>
    </interactant>
    <organismsDiffer>false</organismsDiffer>
    <experiments>3</experiments>
</comment>
<comment type="interaction">
    <interactant intactId="EBI-744794">
        <id>Q9BZW7</id>
    </interactant>
    <interactant intactId="EBI-10244131">
        <id>Q8TES7-6</id>
        <label>FBF1</label>
    </interactant>
    <organismsDiffer>false</organismsDiffer>
    <experiments>3</experiments>
</comment>
<comment type="interaction">
    <interactant intactId="EBI-744794">
        <id>Q9BZW7</id>
    </interactant>
    <interactant intactId="EBI-10176227">
        <id>C0H5X2</id>
        <label>FLJ38668</label>
    </interactant>
    <organismsDiffer>false</organismsDiffer>
    <experiments>3</experiments>
</comment>
<comment type="interaction">
    <interactant intactId="EBI-744794">
        <id>Q9BZW7</id>
    </interactant>
    <interactant intactId="EBI-618309">
        <id>Q08379</id>
        <label>GOLGA2</label>
    </interactant>
    <organismsDiffer>false</organismsDiffer>
    <experiments>3</experiments>
</comment>
<comment type="interaction">
    <interactant intactId="EBI-744794">
        <id>Q9BZW7</id>
    </interactant>
    <interactant intactId="EBI-11953488">
        <id>P56524-2</id>
        <label>HDAC4</label>
    </interactant>
    <organismsDiffer>false</organismsDiffer>
    <experiments>3</experiments>
</comment>
<comment type="interaction">
    <interactant intactId="EBI-744794">
        <id>Q9BZW7</id>
    </interactant>
    <interactant intactId="EBI-1052734">
        <id>Q7Z353</id>
        <label>HDX</label>
    </interactant>
    <organismsDiffer>false</organismsDiffer>
    <experiments>3</experiments>
</comment>
<comment type="interaction">
    <interactant intactId="EBI-744794">
        <id>Q9BZW7</id>
    </interactant>
    <interactant intactId="EBI-486809">
        <id>P52272</id>
        <label>HNRNPM</label>
    </interactant>
    <organismsDiffer>false</organismsDiffer>
    <experiments>3</experiments>
</comment>
<comment type="interaction">
    <interactant intactId="EBI-744794">
        <id>Q9BZW7</id>
    </interactant>
    <interactant intactId="EBI-10961706">
        <id>Q96ED9-2</id>
        <label>HOOK2</label>
    </interactant>
    <organismsDiffer>false</organismsDiffer>
    <experiments>3</experiments>
</comment>
<comment type="interaction">
    <interactant intactId="EBI-744794">
        <id>Q9BZW7</id>
    </interactant>
    <interactant intactId="EBI-17181882">
        <id>O75564-2</id>
        <label>JRK</label>
    </interactant>
    <organismsDiffer>false</organismsDiffer>
    <experiments>3</experiments>
</comment>
<comment type="interaction">
    <interactant intactId="EBI-744794">
        <id>Q9BZW7</id>
    </interactant>
    <interactant intactId="EBI-2556193">
        <id>Q63ZY3</id>
        <label>KANK2</label>
    </interactant>
    <organismsDiffer>false</organismsDiffer>
    <experiments>3</experiments>
</comment>
<comment type="interaction">
    <interactant intactId="EBI-744794">
        <id>Q9BZW7</id>
    </interactant>
    <interactant intactId="EBI-3437878">
        <id>Q86T90</id>
        <label>KIAA1328</label>
    </interactant>
    <organismsDiffer>false</organismsDiffer>
    <experiments>3</experiments>
</comment>
<comment type="interaction">
    <interactant intactId="EBI-744794">
        <id>Q9BZW7</id>
    </interactant>
    <interactant intactId="EBI-2952745">
        <id>Q01546</id>
        <label>KRT76</label>
    </interactant>
    <organismsDiffer>false</organismsDiffer>
    <experiments>3</experiments>
</comment>
<comment type="interaction">
    <interactant intactId="EBI-744794">
        <id>Q9BZW7</id>
    </interactant>
    <interactant intactId="EBI-1216080">
        <id>Q9Y250</id>
        <label>LZTS1</label>
    </interactant>
    <organismsDiffer>false</organismsDiffer>
    <experiments>3</experiments>
</comment>
<comment type="interaction">
    <interactant intactId="EBI-744794">
        <id>Q9BZW7</id>
    </interactant>
    <interactant intactId="EBI-742610">
        <id>Q9Y6D9</id>
        <label>MAD1L1</label>
    </interactant>
    <organismsDiffer>false</organismsDiffer>
    <experiments>3</experiments>
</comment>
<comment type="interaction">
    <interactant intactId="EBI-744794">
        <id>Q9BZW7</id>
    </interactant>
    <interactant intactId="EBI-352602">
        <id>P43243</id>
        <label>MATR3</label>
    </interactant>
    <organismsDiffer>false</organismsDiffer>
    <experiments>3</experiments>
</comment>
<comment type="interaction">
    <interactant intactId="EBI-744794">
        <id>Q9BZW7</id>
    </interactant>
    <interactant intactId="EBI-12516603">
        <id>Q8WWY6</id>
        <label>MBD3L1</label>
    </interactant>
    <organismsDiffer>false</organismsDiffer>
    <experiments>3</experiments>
</comment>
<comment type="interaction">
    <interactant intactId="EBI-744794">
        <id>Q9BZW7</id>
    </interactant>
    <interactant intactId="EBI-10172526">
        <id>Q9UJV3-2</id>
        <label>MID2</label>
    </interactant>
    <organismsDiffer>false</organismsDiffer>
    <experiments>3</experiments>
</comment>
<comment type="interaction">
    <interactant intactId="EBI-744794">
        <id>Q9BZW7</id>
    </interactant>
    <interactant intactId="EBI-8641936">
        <id>Q15742</id>
        <label>NAB2</label>
    </interactant>
    <organismsDiffer>false</organismsDiffer>
    <experiments>3</experiments>
</comment>
<comment type="interaction">
    <interactant intactId="EBI-744794">
        <id>Q9BZW7</id>
    </interactant>
    <interactant intactId="EBI-741896">
        <id>Q9P286</id>
        <label>PAK5</label>
    </interactant>
    <organismsDiffer>false</organismsDiffer>
    <experiments>3</experiments>
</comment>
<comment type="interaction">
    <interactant intactId="EBI-744794">
        <id>Q9BZW7</id>
    </interactant>
    <interactant intactId="EBI-14066006">
        <id>Q4G0R1</id>
        <label>PIBF1</label>
    </interactant>
    <organismsDiffer>false</organismsDiffer>
    <experiments>3</experiments>
</comment>
<comment type="interaction">
    <interactant intactId="EBI-744794">
        <id>Q9BZW7</id>
    </interactant>
    <interactant intactId="EBI-602382">
        <id>Q16512</id>
        <label>PKN1</label>
    </interactant>
    <organismsDiffer>false</organismsDiffer>
    <experiments>3</experiments>
</comment>
<comment type="interaction">
    <interactant intactId="EBI-744794">
        <id>Q9BZW7</id>
    </interactant>
    <interactant intactId="EBI-12069346">
        <id>Q6IQ23-2</id>
        <label>PLEKHA7</label>
    </interactant>
    <organismsDiffer>false</organismsDiffer>
    <experiments>3</experiments>
</comment>
<comment type="interaction">
    <interactant intactId="EBI-744794">
        <id>Q9BZW7</id>
    </interactant>
    <interactant intactId="EBI-474076">
        <id>Q8NEY8</id>
        <label>PPHLN1</label>
    </interactant>
    <organismsDiffer>false</organismsDiffer>
    <experiments>3</experiments>
</comment>
<comment type="interaction">
    <interactant intactId="EBI-744794">
        <id>Q9BZW7</id>
    </interactant>
    <interactant intactId="EBI-1105153">
        <id>Q96KQ4</id>
        <label>PPP1R13B</label>
    </interactant>
    <organismsDiffer>false</organismsDiffer>
    <experiments>3</experiments>
</comment>
<comment type="interaction">
    <interactant intactId="EBI-744794">
        <id>Q9BZW7</id>
    </interactant>
    <interactant intactId="EBI-2557469">
        <id>Q6NYC8</id>
        <label>PPP1R18</label>
    </interactant>
    <organismsDiffer>false</organismsDiffer>
    <experiments>3</experiments>
</comment>
<comment type="interaction">
    <interactant intactId="EBI-744794">
        <id>Q9BZW7</id>
    </interactant>
    <interactant intactId="EBI-3957793">
        <id>Q9GZV8</id>
        <label>PRDM14</label>
    </interactant>
    <organismsDiffer>false</organismsDiffer>
    <experiments>3</experiments>
</comment>
<comment type="interaction">
    <interactant intactId="EBI-744794">
        <id>Q9BZW7</id>
    </interactant>
    <interactant intactId="EBI-11320284">
        <id>Q9NQX0</id>
        <label>PRDM6</label>
    </interactant>
    <organismsDiffer>false</organismsDiffer>
    <experiments>3</experiments>
</comment>
<comment type="interaction">
    <interactant intactId="EBI-744794">
        <id>Q9BZW7</id>
    </interactant>
    <interactant intactId="EBI-1567797">
        <id>Q8WWY3</id>
        <label>PRPF31</label>
    </interactant>
    <organismsDiffer>false</organismsDiffer>
    <experiments>6</experiments>
</comment>
<comment type="interaction">
    <interactant intactId="EBI-744794">
        <id>Q9BZW7</id>
    </interactant>
    <interactant intactId="EBI-1210429">
        <id>Q9NYW8</id>
        <label>RBAK</label>
    </interactant>
    <organismsDiffer>false</organismsDiffer>
    <experiments>3</experiments>
</comment>
<comment type="interaction">
    <interactant intactId="EBI-744794">
        <id>Q9BZW7</id>
    </interactant>
    <interactant intactId="EBI-743428">
        <id>Q9P2K3</id>
        <label>RCOR3</label>
    </interactant>
    <organismsDiffer>false</organismsDiffer>
    <experiments>3</experiments>
</comment>
<comment type="interaction">
    <interactant intactId="EBI-744794">
        <id>Q9BZW7</id>
    </interactant>
    <interactant intactId="EBI-16428950">
        <id>A0A0S2Z4G9</id>
        <label>RNF6</label>
    </interactant>
    <organismsDiffer>false</organismsDiffer>
    <experiments>3</experiments>
</comment>
<comment type="interaction">
    <interactant intactId="EBI-744794">
        <id>Q9BZW7</id>
    </interactant>
    <interactant intactId="EBI-10217913">
        <id>Q14D33</id>
        <label>RTP5</label>
    </interactant>
    <organismsDiffer>false</organismsDiffer>
    <experiments>3</experiments>
</comment>
<comment type="interaction">
    <interactant intactId="EBI-744794">
        <id>Q9BZW7</id>
    </interactant>
    <interactant intactId="EBI-7543896">
        <id>O95171</id>
        <label>SCEL</label>
    </interactant>
    <organismsDiffer>false</organismsDiffer>
    <experiments>3</experiments>
</comment>
<comment type="interaction">
    <interactant intactId="EBI-744794">
        <id>Q9BZW7</id>
    </interactant>
    <interactant intactId="EBI-741237">
        <id>O60504</id>
        <label>SORBS3</label>
    </interactant>
    <organismsDiffer>false</organismsDiffer>
    <experiments>3</experiments>
</comment>
<comment type="interaction">
    <interactant intactId="EBI-744794">
        <id>Q9BZW7</id>
    </interactant>
    <interactant intactId="EBI-10246152">
        <id>Q5T7P8-2</id>
        <label>SYT6</label>
    </interactant>
    <organismsDiffer>false</organismsDiffer>
    <experiments>3</experiments>
</comment>
<comment type="interaction">
    <interactant intactId="EBI-744794">
        <id>Q9BZW7</id>
    </interactant>
    <interactant intactId="EBI-710310">
        <id>Q15560</id>
        <label>TCEA2</label>
    </interactant>
    <organismsDiffer>false</organismsDiffer>
    <experiments>3</experiments>
</comment>
<comment type="interaction">
    <interactant intactId="EBI-744794">
        <id>Q9BZW7</id>
    </interactant>
    <interactant intactId="EBI-717810">
        <id>Q08117</id>
        <label>TLE5</label>
    </interactant>
    <organismsDiffer>false</organismsDiffer>
    <experiments>3</experiments>
</comment>
<comment type="interaction">
    <interactant intactId="EBI-744794">
        <id>Q9BZW7</id>
    </interactant>
    <interactant intactId="EBI-11952721">
        <id>Q05BL1</id>
        <label>TP53BP2</label>
    </interactant>
    <organismsDiffer>false</organismsDiffer>
    <experiments>3</experiments>
</comment>
<comment type="interaction">
    <interactant intactId="EBI-744794">
        <id>Q9BZW7</id>
    </interactant>
    <interactant intactId="EBI-2820256">
        <id>Q14142</id>
        <label>TRIM14</label>
    </interactant>
    <organismsDiffer>false</organismsDiffer>
    <experiments>3</experiments>
</comment>
<comment type="interaction">
    <interactant intactId="EBI-744794">
        <id>Q9BZW7</id>
    </interactant>
    <interactant intactId="EBI-744471">
        <id>O43167</id>
        <label>ZBTB24</label>
    </interactant>
    <organismsDiffer>false</organismsDiffer>
    <experiments>3</experiments>
</comment>
<comment type="interaction">
    <interactant intactId="EBI-744794">
        <id>Q9BZW7</id>
    </interactant>
    <interactant intactId="EBI-3918996">
        <id>Q9HCK0</id>
        <label>ZBTB26</label>
    </interactant>
    <organismsDiffer>false</organismsDiffer>
    <experiments>3</experiments>
</comment>
<comment type="interaction">
    <interactant intactId="EBI-744794">
        <id>Q9BZW7</id>
    </interactant>
    <interactant intactId="EBI-9995672">
        <id>O15060</id>
        <label>ZBTB39</label>
    </interactant>
    <organismsDiffer>false</organismsDiffer>
    <experiments>3</experiments>
</comment>
<comment type="interaction">
    <interactant intactId="EBI-744794">
        <id>Q9BZW7</id>
    </interactant>
    <interactant intactId="EBI-2555767">
        <id>Q15973</id>
        <label>ZNF124</label>
    </interactant>
    <organismsDiffer>false</organismsDiffer>
    <experiments>3</experiments>
</comment>
<comment type="interaction">
    <interactant intactId="EBI-744794">
        <id>Q9BZW7</id>
    </interactant>
    <interactant intactId="EBI-10297542">
        <id>Q9BSG1-2</id>
        <label>ZNF2</label>
    </interactant>
    <organismsDiffer>false</organismsDiffer>
    <experiments>3</experiments>
</comment>
<comment type="interaction">
    <interactant intactId="EBI-744794">
        <id>Q9BZW7</id>
    </interactant>
    <interactant intactId="EBI-747343">
        <id>O95201</id>
        <label>ZNF205</label>
    </interactant>
    <organismsDiffer>false</organismsDiffer>
    <experiments>3</experiments>
</comment>
<comment type="interaction">
    <interactant intactId="EBI-744794">
        <id>Q9BZW7</id>
    </interactant>
    <interactant intactId="EBI-5657766">
        <id>P17027</id>
        <label>ZNF23</label>
    </interactant>
    <organismsDiffer>false</organismsDiffer>
    <experiments>3</experiments>
</comment>
<comment type="interaction">
    <interactant intactId="EBI-744794">
        <id>Q9BZW7</id>
    </interactant>
    <interactant intactId="EBI-720304">
        <id>Q86VK4</id>
        <label>ZNF410</label>
    </interactant>
    <organismsDiffer>false</organismsDiffer>
    <experiments>3</experiments>
</comment>
<comment type="interaction">
    <interactant intactId="EBI-744794">
        <id>Q9BZW7</id>
    </interactant>
    <interactant intactId="EBI-11741890">
        <id>Q86VK4-3</id>
        <label>ZNF410</label>
    </interactant>
    <organismsDiffer>false</organismsDiffer>
    <experiments>3</experiments>
</comment>
<comment type="interaction">
    <interactant intactId="EBI-744794">
        <id>Q9BZW7</id>
    </interactant>
    <interactant intactId="EBI-740727">
        <id>Q8TAU3</id>
        <label>ZNF417</label>
    </interactant>
    <organismsDiffer>false</organismsDiffer>
    <experiments>3</experiments>
</comment>
<comment type="interaction">
    <interactant intactId="EBI-744794">
        <id>Q9BZW7</id>
    </interactant>
    <interactant intactId="EBI-743265">
        <id>Q9BUY5</id>
        <label>ZNF426</label>
    </interactant>
    <organismsDiffer>false</organismsDiffer>
    <experiments>3</experiments>
</comment>
<comment type="interaction">
    <interactant intactId="EBI-744794">
        <id>Q9BZW7</id>
    </interactant>
    <interactant intactId="EBI-11962468">
        <id>Q7Z4V0</id>
        <label>ZNF438</label>
    </interactant>
    <organismsDiffer>false</organismsDiffer>
    <experiments>3</experiments>
</comment>
<comment type="interaction">
    <interactant intactId="EBI-744794">
        <id>Q9BZW7</id>
    </interactant>
    <interactant intactId="EBI-1105370">
        <id>Q9ULM2</id>
        <label>ZNF490</label>
    </interactant>
    <organismsDiffer>false</organismsDiffer>
    <experiments>3</experiments>
</comment>
<comment type="interaction">
    <interactant intactId="EBI-744794">
        <id>Q9BZW7</id>
    </interactant>
    <interactant intactId="EBI-2841978">
        <id>Q6NX49</id>
        <label>ZNF544</label>
    </interactant>
    <organismsDiffer>false</organismsDiffer>
    <experiments>3</experiments>
</comment>
<comment type="interaction">
    <interactant intactId="EBI-744794">
        <id>Q9BZW7</id>
    </interactant>
    <interactant intactId="EBI-6427977">
        <id>Q96SQ5</id>
        <label>ZNF587</label>
    </interactant>
    <organismsDiffer>false</organismsDiffer>
    <experiments>3</experiments>
</comment>
<comment type="interaction">
    <interactant intactId="EBI-744794">
        <id>Q9BZW7</id>
    </interactant>
    <interactant intactId="EBI-8653994">
        <id>Q96NL3</id>
        <label>ZNF599</label>
    </interactant>
    <organismsDiffer>false</organismsDiffer>
    <experiments>3</experiments>
</comment>
<comment type="interaction">
    <interactant intactId="EBI-744794">
        <id>Q9BZW7</id>
    </interactant>
    <interactant intactId="EBI-745276">
        <id>Q9BS34</id>
        <label>ZNF670</label>
    </interactant>
    <organismsDiffer>false</organismsDiffer>
    <experiments>3</experiments>
</comment>
<comment type="interaction">
    <interactant intactId="EBI-744794">
        <id>Q9BZW7</id>
    </interactant>
    <interactant intactId="EBI-17234977">
        <id>A0A1U9X8X8</id>
    </interactant>
    <organismsDiffer>false</organismsDiffer>
    <experiments>3</experiments>
</comment>
<comment type="interaction">
    <interactant intactId="EBI-744794">
        <id>Q9BZW7</id>
    </interactant>
    <interactant intactId="EBI-10307481">
        <id>Q9H6F0</id>
    </interactant>
    <organismsDiffer>false</organismsDiffer>
    <experiments>3</experiments>
</comment>
<comment type="subcellular location">
    <subcellularLocation>
        <location evidence="3">Cytoplasm</location>
    </subcellularLocation>
    <subcellularLocation>
        <location evidence="7">Cytoplasm</location>
        <location evidence="7">Cytoskeleton</location>
        <location evidence="7">Microtubule organizing center</location>
        <location evidence="7">Centrosome</location>
        <location evidence="7">Centriole</location>
    </subcellularLocation>
    <text evidence="3 7">In mature spermatozoa, localizes to the centriole and midpiece (PubMed:28905369). The 27-kDa peptide associates with the fibrous sheath in mature spermatozoa and localizes to the principal piece of sperm tail, while the 55-kDa peptide localizes to the midpiece (By similarity). Detected in the cytoplasm of almost all spermatogonial cells within the seminiferous tubules (By similarity).</text>
</comment>
<comment type="alternative products">
    <event type="alternative splicing"/>
    <isoform>
        <id>Q9BZW7-1</id>
        <name>1</name>
        <sequence type="displayed"/>
    </isoform>
    <isoform>
        <id>Q9BZW7-2</id>
        <name>2</name>
        <sequence type="described" ref="VSP_054409 VSP_054410"/>
    </isoform>
</comment>
<comment type="tissue specificity">
    <text evidence="5 6 7">Expressed in the testis, in spermatozoa (at protein level) (PubMed:11179690, PubMed:28905369). Expressed in actively dividing fetal tissues, including sternum, intestine, limb, kidney and stomach (PubMed:14585816).</text>
</comment>
<comment type="PTM">
    <text evidence="2">Processed into N-terminal 27-kDa and C-terminal 55-kDa fragments.</text>
</comment>
<comment type="disease" evidence="7">
    <disease id="DI-05243">
        <name>Spermatogenic failure 26</name>
        <acronym>SPGF26</acronym>
        <description>An autosomal recessive infertility disorder caused by spermatogenesis defects that result in acephalic spermatozoa.</description>
        <dbReference type="MIM" id="617961"/>
    </disease>
    <text>The disease is caused by variants affecting the gene represented in this entry.</text>
</comment>
<comment type="similarity">
    <text evidence="9">Belongs to the CEP135/TSGA10 family.</text>
</comment>
<feature type="chain" id="PRO_0000307125" description="Testis-specific gene 10 protein">
    <location>
        <begin position="1"/>
        <end position="698"/>
    </location>
</feature>
<feature type="region of interest" description="Interaction with HIF1A" evidence="1">
    <location>
        <begin position="556"/>
        <end position="689"/>
    </location>
</feature>
<feature type="region of interest" description="Disordered" evidence="4">
    <location>
        <begin position="659"/>
        <end position="685"/>
    </location>
</feature>
<feature type="compositionally biased region" description="Polar residues" evidence="4">
    <location>
        <begin position="659"/>
        <end position="670"/>
    </location>
</feature>
<feature type="compositionally biased region" description="Basic and acidic residues" evidence="4">
    <location>
        <begin position="671"/>
        <end position="685"/>
    </location>
</feature>
<feature type="modified residue" description="Phosphoserine" evidence="10">
    <location>
        <position position="163"/>
    </location>
</feature>
<feature type="modified residue" description="Phosphoserine" evidence="3">
    <location>
        <position position="688"/>
    </location>
</feature>
<feature type="splice variant" id="VSP_054409" description="In isoform 2." evidence="8">
    <original>EKT</original>
    <variation>TVY</variation>
    <location>
        <begin position="295"/>
        <end position="297"/>
    </location>
</feature>
<feature type="splice variant" id="VSP_054410" description="In isoform 2." evidence="8">
    <location>
        <begin position="298"/>
        <end position="698"/>
    </location>
</feature>
<feature type="sequence conflict" description="In Ref. 2; AAK27309." evidence="9" ref="2">
    <original>T</original>
    <variation>EP</variation>
    <location>
        <position position="28"/>
    </location>
</feature>
<feature type="sequence conflict" description="In Ref. 6; AAH28366." evidence="9" ref="6">
    <original>L</original>
    <variation>M</variation>
    <location>
        <position position="273"/>
    </location>
</feature>
<feature type="sequence conflict" description="In Ref. 2; AAK27309." evidence="9" ref="2">
    <original>K</original>
    <variation>N</variation>
    <location>
        <position position="365"/>
    </location>
</feature>
<feature type="sequence conflict" description="In Ref. 2; AAK27309." evidence="9" ref="2">
    <original>E</original>
    <variation>G</variation>
    <location>
        <position position="624"/>
    </location>
</feature>
<protein>
    <recommendedName>
        <fullName>Testis-specific gene 10 protein</fullName>
    </recommendedName>
    <alternativeName>
        <fullName>Testis development protein NYD-SP7</fullName>
    </alternativeName>
</protein>
<reference key="1">
    <citation type="journal article" date="2001" name="Gene">
        <title>Identification and characterisation of a novel gene, TSGA10, expressed in testis.</title>
        <authorList>
            <person name="Modarressi M.H."/>
            <person name="Cameron J."/>
            <person name="Taylor K.E."/>
            <person name="Wolfe J."/>
        </authorList>
    </citation>
    <scope>NUCLEOTIDE SEQUENCE [MRNA] (ISOFORM 1)</scope>
    <scope>TISSUE SPECIFICITY</scope>
    <source>
        <tissue>Testis</tissue>
    </source>
</reference>
<reference key="2">
    <citation type="submission" date="2000-11" db="EMBL/GenBank/DDBJ databases">
        <title>NYD-SP7: a novel gene related to human testis development.</title>
        <authorList>
            <person name="Sha J.H."/>
            <person name="Zhou Z.M."/>
        </authorList>
    </citation>
    <scope>NUCLEOTIDE SEQUENCE [MRNA] (ISOFORM 1)</scope>
    <source>
        <tissue>Testis</tissue>
    </source>
</reference>
<reference key="3">
    <citation type="journal article" date="2004" name="Nat. Genet.">
        <title>Complete sequencing and characterization of 21,243 full-length human cDNAs.</title>
        <authorList>
            <person name="Ota T."/>
            <person name="Suzuki Y."/>
            <person name="Nishikawa T."/>
            <person name="Otsuki T."/>
            <person name="Sugiyama T."/>
            <person name="Irie R."/>
            <person name="Wakamatsu A."/>
            <person name="Hayashi K."/>
            <person name="Sato H."/>
            <person name="Nagai K."/>
            <person name="Kimura K."/>
            <person name="Makita H."/>
            <person name="Sekine M."/>
            <person name="Obayashi M."/>
            <person name="Nishi T."/>
            <person name="Shibahara T."/>
            <person name="Tanaka T."/>
            <person name="Ishii S."/>
            <person name="Yamamoto J."/>
            <person name="Saito K."/>
            <person name="Kawai Y."/>
            <person name="Isono Y."/>
            <person name="Nakamura Y."/>
            <person name="Nagahari K."/>
            <person name="Murakami K."/>
            <person name="Yasuda T."/>
            <person name="Iwayanagi T."/>
            <person name="Wagatsuma M."/>
            <person name="Shiratori A."/>
            <person name="Sudo H."/>
            <person name="Hosoiri T."/>
            <person name="Kaku Y."/>
            <person name="Kodaira H."/>
            <person name="Kondo H."/>
            <person name="Sugawara M."/>
            <person name="Takahashi M."/>
            <person name="Kanda K."/>
            <person name="Yokoi T."/>
            <person name="Furuya T."/>
            <person name="Kikkawa E."/>
            <person name="Omura Y."/>
            <person name="Abe K."/>
            <person name="Kamihara K."/>
            <person name="Katsuta N."/>
            <person name="Sato K."/>
            <person name="Tanikawa M."/>
            <person name="Yamazaki M."/>
            <person name="Ninomiya K."/>
            <person name="Ishibashi T."/>
            <person name="Yamashita H."/>
            <person name="Murakawa K."/>
            <person name="Fujimori K."/>
            <person name="Tanai H."/>
            <person name="Kimata M."/>
            <person name="Watanabe M."/>
            <person name="Hiraoka S."/>
            <person name="Chiba Y."/>
            <person name="Ishida S."/>
            <person name="Ono Y."/>
            <person name="Takiguchi S."/>
            <person name="Watanabe S."/>
            <person name="Yosida M."/>
            <person name="Hotuta T."/>
            <person name="Kusano J."/>
            <person name="Kanehori K."/>
            <person name="Takahashi-Fujii A."/>
            <person name="Hara H."/>
            <person name="Tanase T.-O."/>
            <person name="Nomura Y."/>
            <person name="Togiya S."/>
            <person name="Komai F."/>
            <person name="Hara R."/>
            <person name="Takeuchi K."/>
            <person name="Arita M."/>
            <person name="Imose N."/>
            <person name="Musashino K."/>
            <person name="Yuuki H."/>
            <person name="Oshima A."/>
            <person name="Sasaki N."/>
            <person name="Aotsuka S."/>
            <person name="Yoshikawa Y."/>
            <person name="Matsunawa H."/>
            <person name="Ichihara T."/>
            <person name="Shiohata N."/>
            <person name="Sano S."/>
            <person name="Moriya S."/>
            <person name="Momiyama H."/>
            <person name="Satoh N."/>
            <person name="Takami S."/>
            <person name="Terashima Y."/>
            <person name="Suzuki O."/>
            <person name="Nakagawa S."/>
            <person name="Senoh A."/>
            <person name="Mizoguchi H."/>
            <person name="Goto Y."/>
            <person name="Shimizu F."/>
            <person name="Wakebe H."/>
            <person name="Hishigaki H."/>
            <person name="Watanabe T."/>
            <person name="Sugiyama A."/>
            <person name="Takemoto M."/>
            <person name="Kawakami B."/>
            <person name="Yamazaki M."/>
            <person name="Watanabe K."/>
            <person name="Kumagai A."/>
            <person name="Itakura S."/>
            <person name="Fukuzumi Y."/>
            <person name="Fujimori Y."/>
            <person name="Komiyama M."/>
            <person name="Tashiro H."/>
            <person name="Tanigami A."/>
            <person name="Fujiwara T."/>
            <person name="Ono T."/>
            <person name="Yamada K."/>
            <person name="Fujii Y."/>
            <person name="Ozaki K."/>
            <person name="Hirao M."/>
            <person name="Ohmori Y."/>
            <person name="Kawabata A."/>
            <person name="Hikiji T."/>
            <person name="Kobatake N."/>
            <person name="Inagaki H."/>
            <person name="Ikema Y."/>
            <person name="Okamoto S."/>
            <person name="Okitani R."/>
            <person name="Kawakami T."/>
            <person name="Noguchi S."/>
            <person name="Itoh T."/>
            <person name="Shigeta K."/>
            <person name="Senba T."/>
            <person name="Matsumura K."/>
            <person name="Nakajima Y."/>
            <person name="Mizuno T."/>
            <person name="Morinaga M."/>
            <person name="Sasaki M."/>
            <person name="Togashi T."/>
            <person name="Oyama M."/>
            <person name="Hata H."/>
            <person name="Watanabe M."/>
            <person name="Komatsu T."/>
            <person name="Mizushima-Sugano J."/>
            <person name="Satoh T."/>
            <person name="Shirai Y."/>
            <person name="Takahashi Y."/>
            <person name="Nakagawa K."/>
            <person name="Okumura K."/>
            <person name="Nagase T."/>
            <person name="Nomura N."/>
            <person name="Kikuchi H."/>
            <person name="Masuho Y."/>
            <person name="Yamashita R."/>
            <person name="Nakai K."/>
            <person name="Yada T."/>
            <person name="Nakamura Y."/>
            <person name="Ohara O."/>
            <person name="Isogai T."/>
            <person name="Sugano S."/>
        </authorList>
    </citation>
    <scope>NUCLEOTIDE SEQUENCE [LARGE SCALE MRNA] (ISOFORM 2)</scope>
    <source>
        <tissue>Trachea</tissue>
    </source>
</reference>
<reference key="4">
    <citation type="journal article" date="2005" name="Nature">
        <title>Generation and annotation of the DNA sequences of human chromosomes 2 and 4.</title>
        <authorList>
            <person name="Hillier L.W."/>
            <person name="Graves T.A."/>
            <person name="Fulton R.S."/>
            <person name="Fulton L.A."/>
            <person name="Pepin K.H."/>
            <person name="Minx P."/>
            <person name="Wagner-McPherson C."/>
            <person name="Layman D."/>
            <person name="Wylie K."/>
            <person name="Sekhon M."/>
            <person name="Becker M.C."/>
            <person name="Fewell G.A."/>
            <person name="Delehaunty K.D."/>
            <person name="Miner T.L."/>
            <person name="Nash W.E."/>
            <person name="Kremitzki C."/>
            <person name="Oddy L."/>
            <person name="Du H."/>
            <person name="Sun H."/>
            <person name="Bradshaw-Cordum H."/>
            <person name="Ali J."/>
            <person name="Carter J."/>
            <person name="Cordes M."/>
            <person name="Harris A."/>
            <person name="Isak A."/>
            <person name="van Brunt A."/>
            <person name="Nguyen C."/>
            <person name="Du F."/>
            <person name="Courtney L."/>
            <person name="Kalicki J."/>
            <person name="Ozersky P."/>
            <person name="Abbott S."/>
            <person name="Armstrong J."/>
            <person name="Belter E.A."/>
            <person name="Caruso L."/>
            <person name="Cedroni M."/>
            <person name="Cotton M."/>
            <person name="Davidson T."/>
            <person name="Desai A."/>
            <person name="Elliott G."/>
            <person name="Erb T."/>
            <person name="Fronick C."/>
            <person name="Gaige T."/>
            <person name="Haakenson W."/>
            <person name="Haglund K."/>
            <person name="Holmes A."/>
            <person name="Harkins R."/>
            <person name="Kim K."/>
            <person name="Kruchowski S.S."/>
            <person name="Strong C.M."/>
            <person name="Grewal N."/>
            <person name="Goyea E."/>
            <person name="Hou S."/>
            <person name="Levy A."/>
            <person name="Martinka S."/>
            <person name="Mead K."/>
            <person name="McLellan M.D."/>
            <person name="Meyer R."/>
            <person name="Randall-Maher J."/>
            <person name="Tomlinson C."/>
            <person name="Dauphin-Kohlberg S."/>
            <person name="Kozlowicz-Reilly A."/>
            <person name="Shah N."/>
            <person name="Swearengen-Shahid S."/>
            <person name="Snider J."/>
            <person name="Strong J.T."/>
            <person name="Thompson J."/>
            <person name="Yoakum M."/>
            <person name="Leonard S."/>
            <person name="Pearman C."/>
            <person name="Trani L."/>
            <person name="Radionenko M."/>
            <person name="Waligorski J.E."/>
            <person name="Wang C."/>
            <person name="Rock S.M."/>
            <person name="Tin-Wollam A.-M."/>
            <person name="Maupin R."/>
            <person name="Latreille P."/>
            <person name="Wendl M.C."/>
            <person name="Yang S.-P."/>
            <person name="Pohl C."/>
            <person name="Wallis J.W."/>
            <person name="Spieth J."/>
            <person name="Bieri T.A."/>
            <person name="Berkowicz N."/>
            <person name="Nelson J.O."/>
            <person name="Osborne J."/>
            <person name="Ding L."/>
            <person name="Meyer R."/>
            <person name="Sabo A."/>
            <person name="Shotland Y."/>
            <person name="Sinha P."/>
            <person name="Wohldmann P.E."/>
            <person name="Cook L.L."/>
            <person name="Hickenbotham M.T."/>
            <person name="Eldred J."/>
            <person name="Williams D."/>
            <person name="Jones T.A."/>
            <person name="She X."/>
            <person name="Ciccarelli F.D."/>
            <person name="Izaurralde E."/>
            <person name="Taylor J."/>
            <person name="Schmutz J."/>
            <person name="Myers R.M."/>
            <person name="Cox D.R."/>
            <person name="Huang X."/>
            <person name="McPherson J.D."/>
            <person name="Mardis E.R."/>
            <person name="Clifton S.W."/>
            <person name="Warren W.C."/>
            <person name="Chinwalla A.T."/>
            <person name="Eddy S.R."/>
            <person name="Marra M.A."/>
            <person name="Ovcharenko I."/>
            <person name="Furey T.S."/>
            <person name="Miller W."/>
            <person name="Eichler E.E."/>
            <person name="Bork P."/>
            <person name="Suyama M."/>
            <person name="Torrents D."/>
            <person name="Waterston R.H."/>
            <person name="Wilson R.K."/>
        </authorList>
    </citation>
    <scope>NUCLEOTIDE SEQUENCE [LARGE SCALE GENOMIC DNA]</scope>
</reference>
<reference key="5">
    <citation type="submission" date="2005-09" db="EMBL/GenBank/DDBJ databases">
        <authorList>
            <person name="Mural R.J."/>
            <person name="Istrail S."/>
            <person name="Sutton G.G."/>
            <person name="Florea L."/>
            <person name="Halpern A.L."/>
            <person name="Mobarry C.M."/>
            <person name="Lippert R."/>
            <person name="Walenz B."/>
            <person name="Shatkay H."/>
            <person name="Dew I."/>
            <person name="Miller J.R."/>
            <person name="Flanigan M.J."/>
            <person name="Edwards N.J."/>
            <person name="Bolanos R."/>
            <person name="Fasulo D."/>
            <person name="Halldorsson B.V."/>
            <person name="Hannenhalli S."/>
            <person name="Turner R."/>
            <person name="Yooseph S."/>
            <person name="Lu F."/>
            <person name="Nusskern D.R."/>
            <person name="Shue B.C."/>
            <person name="Zheng X.H."/>
            <person name="Zhong F."/>
            <person name="Delcher A.L."/>
            <person name="Huson D.H."/>
            <person name="Kravitz S.A."/>
            <person name="Mouchard L."/>
            <person name="Reinert K."/>
            <person name="Remington K.A."/>
            <person name="Clark A.G."/>
            <person name="Waterman M.S."/>
            <person name="Eichler E.E."/>
            <person name="Adams M.D."/>
            <person name="Hunkapiller M.W."/>
            <person name="Myers E.W."/>
            <person name="Venter J.C."/>
        </authorList>
    </citation>
    <scope>NUCLEOTIDE SEQUENCE [LARGE SCALE GENOMIC DNA]</scope>
</reference>
<reference key="6">
    <citation type="journal article" date="2004" name="Genome Res.">
        <title>The status, quality, and expansion of the NIH full-length cDNA project: the Mammalian Gene Collection (MGC).</title>
        <authorList>
            <consortium name="The MGC Project Team"/>
        </authorList>
    </citation>
    <scope>NUCLEOTIDE SEQUENCE [LARGE SCALE MRNA] (ISOFORM 1)</scope>
    <source>
        <tissue>Testis</tissue>
    </source>
</reference>
<reference key="7">
    <citation type="journal article" date="2004" name="Biol. Reprod.">
        <title>Tsga10 encodes a 65-kilodalton protein that is processed to the 27-kilodalton fibrous sheath protein.</title>
        <authorList>
            <person name="Modarressi M.H."/>
            <person name="Behnam B."/>
            <person name="Cheng M."/>
            <person name="Taylor K.E."/>
            <person name="Wolfe J."/>
            <person name="van der Hoorn F.A."/>
        </authorList>
    </citation>
    <scope>TISSUE SPECIFICITY</scope>
</reference>
<reference key="8">
    <citation type="journal article" date="2008" name="Proc. Natl. Acad. Sci. U.S.A.">
        <title>A quantitative atlas of mitotic phosphorylation.</title>
        <authorList>
            <person name="Dephoure N."/>
            <person name="Zhou C."/>
            <person name="Villen J."/>
            <person name="Beausoleil S.A."/>
            <person name="Bakalarski C.E."/>
            <person name="Elledge S.J."/>
            <person name="Gygi S.P."/>
        </authorList>
    </citation>
    <scope>PHOSPHORYLATION [LARGE SCALE ANALYSIS] AT SER-163</scope>
    <scope>IDENTIFICATION BY MASS SPECTROMETRY [LARGE SCALE ANALYSIS]</scope>
    <source>
        <tissue>Cervix carcinoma</tissue>
    </source>
</reference>
<reference key="9">
    <citation type="journal article" date="2018" name="Clin. Genet.">
        <title>TSGA10 is a novel candidate gene associated with acephalic spermatozoa.</title>
        <authorList>
            <person name="Sha Y.W."/>
            <person name="Sha Y.K."/>
            <person name="Ji Z.Y."/>
            <person name="Mei L.B."/>
            <person name="Ding L."/>
            <person name="Zhang Q."/>
            <person name="Qiu P.P."/>
            <person name="Lin S.B."/>
            <person name="Wang X."/>
            <person name="Li P."/>
            <person name="Xu X."/>
            <person name="Li L."/>
        </authorList>
    </citation>
    <scope>INVOLVEMENT IN SPGF26</scope>
    <scope>FUNCTION</scope>
    <scope>SUBCELLULAR LOCATION</scope>
    <scope>TISSUE SPECIFICITY</scope>
</reference>
<keyword id="KW-0025">Alternative splicing</keyword>
<keyword id="KW-0963">Cytoplasm</keyword>
<keyword id="KW-0206">Cytoskeleton</keyword>
<keyword id="KW-0597">Phosphoprotein</keyword>
<keyword id="KW-1267">Proteomics identification</keyword>
<keyword id="KW-1185">Reference proteome</keyword>
<accession>Q9BZW7</accession>
<accession>B7Z925</accession>
<accession>D3DVH7</accession>
<accession>Q8NEP0</accession>
<accession>Q9BWX0</accession>
<dbReference type="EMBL" id="AF254756">
    <property type="protein sequence ID" value="AAK13079.1"/>
    <property type="molecule type" value="mRNA"/>
</dbReference>
<dbReference type="EMBL" id="AY014284">
    <property type="protein sequence ID" value="AAK27309.1"/>
    <property type="molecule type" value="mRNA"/>
</dbReference>
<dbReference type="EMBL" id="AK304328">
    <property type="protein sequence ID" value="BAH14161.1"/>
    <property type="molecule type" value="mRNA"/>
</dbReference>
<dbReference type="EMBL" id="AC019097">
    <property type="protein sequence ID" value="AAY14820.1"/>
    <property type="molecule type" value="Genomic_DNA"/>
</dbReference>
<dbReference type="EMBL" id="AC092587">
    <property type="status" value="NOT_ANNOTATED_CDS"/>
    <property type="molecule type" value="Genomic_DNA"/>
</dbReference>
<dbReference type="EMBL" id="AC110083">
    <property type="status" value="NOT_ANNOTATED_CDS"/>
    <property type="molecule type" value="Genomic_DNA"/>
</dbReference>
<dbReference type="EMBL" id="CH471127">
    <property type="protein sequence ID" value="EAX01889.1"/>
    <property type="molecule type" value="Genomic_DNA"/>
</dbReference>
<dbReference type="EMBL" id="CH471127">
    <property type="protein sequence ID" value="EAX01890.1"/>
    <property type="molecule type" value="Genomic_DNA"/>
</dbReference>
<dbReference type="EMBL" id="CH471127">
    <property type="protein sequence ID" value="EAX01891.1"/>
    <property type="molecule type" value="Genomic_DNA"/>
</dbReference>
<dbReference type="EMBL" id="CH471127">
    <property type="protein sequence ID" value="EAX01892.1"/>
    <property type="molecule type" value="Genomic_DNA"/>
</dbReference>
<dbReference type="EMBL" id="BC028366">
    <property type="protein sequence ID" value="AAH28366.1"/>
    <property type="molecule type" value="mRNA"/>
</dbReference>
<dbReference type="CCDS" id="CCDS2037.1">
    <molecule id="Q9BZW7-1"/>
</dbReference>
<dbReference type="RefSeq" id="NP_001335941.1">
    <molecule id="Q9BZW7-1"/>
    <property type="nucleotide sequence ID" value="NM_001349012.1"/>
</dbReference>
<dbReference type="RefSeq" id="NP_079520.1">
    <molecule id="Q9BZW7-1"/>
    <property type="nucleotide sequence ID" value="NM_025244.4"/>
</dbReference>
<dbReference type="RefSeq" id="NP_878915.2">
    <molecule id="Q9BZW7-1"/>
    <property type="nucleotide sequence ID" value="NM_182911.4"/>
</dbReference>
<dbReference type="RefSeq" id="XP_005264080.1">
    <molecule id="Q9BZW7-1"/>
    <property type="nucleotide sequence ID" value="XM_005264023.2"/>
</dbReference>
<dbReference type="RefSeq" id="XP_005264081.1">
    <property type="nucleotide sequence ID" value="XM_005264024.2"/>
</dbReference>
<dbReference type="RefSeq" id="XP_005264082.1">
    <property type="nucleotide sequence ID" value="XM_005264025.1"/>
</dbReference>
<dbReference type="RefSeq" id="XP_005264083.1">
    <property type="nucleotide sequence ID" value="XM_005264026.1"/>
</dbReference>
<dbReference type="RefSeq" id="XP_005264084.1">
    <property type="nucleotide sequence ID" value="XM_005264027.1"/>
</dbReference>
<dbReference type="RefSeq" id="XP_005264086.1">
    <property type="nucleotide sequence ID" value="XM_005264029.1"/>
</dbReference>
<dbReference type="RefSeq" id="XP_006712844.1">
    <molecule id="Q9BZW7-1"/>
    <property type="nucleotide sequence ID" value="XM_006712781.3"/>
</dbReference>
<dbReference type="RefSeq" id="XP_011510239.1">
    <property type="nucleotide sequence ID" value="XM_011511937.1"/>
</dbReference>
<dbReference type="RefSeq" id="XP_011510241.1">
    <property type="nucleotide sequence ID" value="XM_011511939.1"/>
</dbReference>
<dbReference type="RefSeq" id="XP_011510242.1">
    <property type="nucleotide sequence ID" value="XM_011511940.2"/>
</dbReference>
<dbReference type="RefSeq" id="XP_011510243.1">
    <property type="nucleotide sequence ID" value="XM_011511941.1"/>
</dbReference>
<dbReference type="RefSeq" id="XP_011510244.1">
    <property type="nucleotide sequence ID" value="XM_011511942.1"/>
</dbReference>
<dbReference type="RefSeq" id="XP_011510245.1">
    <property type="nucleotide sequence ID" value="XM_011511943.2"/>
</dbReference>
<dbReference type="RefSeq" id="XP_016860528.1">
    <property type="nucleotide sequence ID" value="XM_017005039.1"/>
</dbReference>
<dbReference type="RefSeq" id="XP_016860529.1">
    <property type="nucleotide sequence ID" value="XM_017005040.1"/>
</dbReference>
<dbReference type="RefSeq" id="XP_016860530.1">
    <molecule id="Q9BZW7-1"/>
    <property type="nucleotide sequence ID" value="XM_017005041.3"/>
</dbReference>
<dbReference type="RefSeq" id="XP_016860531.1">
    <property type="nucleotide sequence ID" value="XM_017005042.1"/>
</dbReference>
<dbReference type="RefSeq" id="XP_016860532.1">
    <property type="nucleotide sequence ID" value="XM_017005043.1"/>
</dbReference>
<dbReference type="RefSeq" id="XP_016860533.1">
    <molecule id="Q9BZW7-1"/>
    <property type="nucleotide sequence ID" value="XM_017005044.2"/>
</dbReference>
<dbReference type="RefSeq" id="XP_016860534.1">
    <property type="nucleotide sequence ID" value="XM_017005045.1"/>
</dbReference>
<dbReference type="RefSeq" id="XP_016860535.1">
    <molecule id="Q9BZW7-1"/>
    <property type="nucleotide sequence ID" value="XM_017005046.2"/>
</dbReference>
<dbReference type="RefSeq" id="XP_016860536.1">
    <property type="nucleotide sequence ID" value="XM_017005047.1"/>
</dbReference>
<dbReference type="RefSeq" id="XP_016860537.1">
    <property type="nucleotide sequence ID" value="XM_017005048.1"/>
</dbReference>
<dbReference type="RefSeq" id="XP_024308926.1">
    <molecule id="Q9BZW7-1"/>
    <property type="nucleotide sequence ID" value="XM_024453158.2"/>
</dbReference>
<dbReference type="RefSeq" id="XP_047301889.1">
    <molecule id="Q9BZW7-1"/>
    <property type="nucleotide sequence ID" value="XM_047445933.1"/>
</dbReference>
<dbReference type="RefSeq" id="XP_047301890.1">
    <molecule id="Q9BZW7-1"/>
    <property type="nucleotide sequence ID" value="XM_047445934.1"/>
</dbReference>
<dbReference type="RefSeq" id="XP_054200042.1">
    <molecule id="Q9BZW7-1"/>
    <property type="nucleotide sequence ID" value="XM_054344067.1"/>
</dbReference>
<dbReference type="RefSeq" id="XP_054200043.1">
    <molecule id="Q9BZW7-1"/>
    <property type="nucleotide sequence ID" value="XM_054344068.1"/>
</dbReference>
<dbReference type="RefSeq" id="XP_054200044.1">
    <molecule id="Q9BZW7-1"/>
    <property type="nucleotide sequence ID" value="XM_054344069.1"/>
</dbReference>
<dbReference type="RefSeq" id="XP_054200045.1">
    <molecule id="Q9BZW7-1"/>
    <property type="nucleotide sequence ID" value="XM_054344070.1"/>
</dbReference>
<dbReference type="RefSeq" id="XP_054200046.1">
    <molecule id="Q9BZW7-1"/>
    <property type="nucleotide sequence ID" value="XM_054344071.1"/>
</dbReference>
<dbReference type="RefSeq" id="XP_054200047.1">
    <molecule id="Q9BZW7-1"/>
    <property type="nucleotide sequence ID" value="XM_054344072.1"/>
</dbReference>
<dbReference type="RefSeq" id="XP_054200048.1">
    <molecule id="Q9BZW7-1"/>
    <property type="nucleotide sequence ID" value="XM_054344073.1"/>
</dbReference>
<dbReference type="RefSeq" id="XP_054200049.1">
    <molecule id="Q9BZW7-1"/>
    <property type="nucleotide sequence ID" value="XM_054344074.1"/>
</dbReference>
<dbReference type="SMR" id="Q9BZW7"/>
<dbReference type="BioGRID" id="123267">
    <property type="interactions" value="96"/>
</dbReference>
<dbReference type="FunCoup" id="Q9BZW7">
    <property type="interactions" value="69"/>
</dbReference>
<dbReference type="IntAct" id="Q9BZW7">
    <property type="interactions" value="82"/>
</dbReference>
<dbReference type="MINT" id="Q9BZW7"/>
<dbReference type="STRING" id="9606.ENSP00000377123"/>
<dbReference type="GlyGen" id="Q9BZW7">
    <property type="glycosylation" value="1 site, 1 O-linked glycan (1 site)"/>
</dbReference>
<dbReference type="iPTMnet" id="Q9BZW7"/>
<dbReference type="PhosphoSitePlus" id="Q9BZW7"/>
<dbReference type="BioMuta" id="TSGA10"/>
<dbReference type="DMDM" id="74724919"/>
<dbReference type="jPOST" id="Q9BZW7"/>
<dbReference type="MassIVE" id="Q9BZW7"/>
<dbReference type="PaxDb" id="9606-ENSP00000377123"/>
<dbReference type="PeptideAtlas" id="Q9BZW7"/>
<dbReference type="ProteomicsDB" id="6998"/>
<dbReference type="ProteomicsDB" id="79912">
    <molecule id="Q9BZW7-1"/>
</dbReference>
<dbReference type="Antibodypedia" id="32767">
    <property type="antibodies" value="140 antibodies from 20 providers"/>
</dbReference>
<dbReference type="DNASU" id="80705"/>
<dbReference type="Ensembl" id="ENST00000355053.8">
    <molecule id="Q9BZW7-1"/>
    <property type="protein sequence ID" value="ENSP00000347161.4"/>
    <property type="gene ID" value="ENSG00000135951.16"/>
</dbReference>
<dbReference type="Ensembl" id="ENST00000393483.8">
    <molecule id="Q9BZW7-1"/>
    <property type="protein sequence ID" value="ENSP00000377123.3"/>
    <property type="gene ID" value="ENSG00000135951.16"/>
</dbReference>
<dbReference type="Ensembl" id="ENST00000410001.5">
    <molecule id="Q9BZW7-1"/>
    <property type="protein sequence ID" value="ENSP00000386956.1"/>
    <property type="gene ID" value="ENSG00000135951.16"/>
</dbReference>
<dbReference type="GeneID" id="80705"/>
<dbReference type="KEGG" id="hsa:80705"/>
<dbReference type="MANE-Select" id="ENST00000393483.8">
    <property type="protein sequence ID" value="ENSP00000377123.3"/>
    <property type="RefSeq nucleotide sequence ID" value="NM_025244.4"/>
    <property type="RefSeq protein sequence ID" value="NP_079520.1"/>
</dbReference>
<dbReference type="UCSC" id="uc002szg.5">
    <molecule id="Q9BZW7-1"/>
    <property type="organism name" value="human"/>
</dbReference>
<dbReference type="AGR" id="HGNC:14927"/>
<dbReference type="CTD" id="80705"/>
<dbReference type="DisGeNET" id="80705"/>
<dbReference type="GeneCards" id="TSGA10"/>
<dbReference type="HGNC" id="HGNC:14927">
    <property type="gene designation" value="TSGA10"/>
</dbReference>
<dbReference type="HPA" id="ENSG00000135951">
    <property type="expression patterns" value="Tissue enriched (testis)"/>
</dbReference>
<dbReference type="MalaCards" id="TSGA10"/>
<dbReference type="MIM" id="607166">
    <property type="type" value="gene"/>
</dbReference>
<dbReference type="MIM" id="617961">
    <property type="type" value="phenotype"/>
</dbReference>
<dbReference type="neXtProt" id="NX_Q9BZW7"/>
<dbReference type="OpenTargets" id="ENSG00000135951"/>
<dbReference type="PharmGKB" id="PA37933"/>
<dbReference type="VEuPathDB" id="HostDB:ENSG00000135951"/>
<dbReference type="eggNOG" id="ENOG502RJHC">
    <property type="taxonomic scope" value="Eukaryota"/>
</dbReference>
<dbReference type="GeneTree" id="ENSGT00940000159205"/>
<dbReference type="InParanoid" id="Q9BZW7"/>
<dbReference type="OrthoDB" id="10254663at2759"/>
<dbReference type="PAN-GO" id="Q9BZW7">
    <property type="GO annotations" value="1 GO annotation based on evolutionary models"/>
</dbReference>
<dbReference type="PhylomeDB" id="Q9BZW7"/>
<dbReference type="TreeFam" id="TF326518"/>
<dbReference type="PathwayCommons" id="Q9BZW7"/>
<dbReference type="SignaLink" id="Q9BZW7"/>
<dbReference type="BioGRID-ORCS" id="80705">
    <property type="hits" value="12 hits in 1151 CRISPR screens"/>
</dbReference>
<dbReference type="ChiTaRS" id="TSGA10">
    <property type="organism name" value="human"/>
</dbReference>
<dbReference type="GenomeRNAi" id="80705"/>
<dbReference type="Pharos" id="Q9BZW7">
    <property type="development level" value="Tbio"/>
</dbReference>
<dbReference type="PRO" id="PR:Q9BZW7"/>
<dbReference type="Proteomes" id="UP000005640">
    <property type="component" value="Chromosome 2"/>
</dbReference>
<dbReference type="RNAct" id="Q9BZW7">
    <property type="molecule type" value="protein"/>
</dbReference>
<dbReference type="Bgee" id="ENSG00000135951">
    <property type="expression patterns" value="Expressed in sperm and 115 other cell types or tissues"/>
</dbReference>
<dbReference type="ExpressionAtlas" id="Q9BZW7">
    <property type="expression patterns" value="baseline and differential"/>
</dbReference>
<dbReference type="GO" id="GO:0005814">
    <property type="term" value="C:centriole"/>
    <property type="evidence" value="ECO:0007669"/>
    <property type="project" value="UniProtKB-SubCell"/>
</dbReference>
<dbReference type="GO" id="GO:0005737">
    <property type="term" value="C:cytoplasm"/>
    <property type="evidence" value="ECO:0007669"/>
    <property type="project" value="UniProtKB-SubCell"/>
</dbReference>
<dbReference type="GO" id="GO:0031514">
    <property type="term" value="C:motile cilium"/>
    <property type="evidence" value="ECO:0000318"/>
    <property type="project" value="GO_Central"/>
</dbReference>
<dbReference type="GO" id="GO:0043005">
    <property type="term" value="C:neuron projection"/>
    <property type="evidence" value="ECO:0007669"/>
    <property type="project" value="Ensembl"/>
</dbReference>
<dbReference type="GO" id="GO:0035686">
    <property type="term" value="C:sperm fibrous sheath"/>
    <property type="evidence" value="ECO:0007669"/>
    <property type="project" value="Ensembl"/>
</dbReference>
<dbReference type="GO" id="GO:0097228">
    <property type="term" value="C:sperm principal piece"/>
    <property type="evidence" value="ECO:0007669"/>
    <property type="project" value="Ensembl"/>
</dbReference>
<dbReference type="GO" id="GO:0030031">
    <property type="term" value="P:cell projection assembly"/>
    <property type="evidence" value="ECO:0007669"/>
    <property type="project" value="Ensembl"/>
</dbReference>
<dbReference type="GO" id="GO:0007283">
    <property type="term" value="P:spermatogenesis"/>
    <property type="evidence" value="ECO:0000304"/>
    <property type="project" value="UniProtKB"/>
</dbReference>
<dbReference type="InterPro" id="IPR051877">
    <property type="entry name" value="Centriole_BasalBody_StrucProt"/>
</dbReference>
<dbReference type="PANTHER" id="PTHR20544">
    <property type="entry name" value="CENTROSOMAL PROTEIN CEP135"/>
    <property type="match status" value="1"/>
</dbReference>
<dbReference type="PANTHER" id="PTHR20544:SF2">
    <property type="entry name" value="TESTIS SPECIFIC 10"/>
    <property type="match status" value="1"/>
</dbReference>